<name>YDJC_HALH5</name>
<sequence>MKLIVNADDFGLSRGVNYGIVDAHELGIVTSTTMLTNMPATNHAFQLMEKYPKLKVGVHLTLSCGAPITTDCPTLINPQGEFRLTSQYLLLKEHGLSEEEVEAEWEAQIQQFYKRGVTPSHLDSHHHIHTWEPIIPVIKRLAQKYDLPVRTGFRNPPNGVRLWSDVIDAGFYGEGVKEKYFIELYEKFKAYDGTIEIMCHPAYIDEVLRQHSSYVEGRLKEFEMLTRIKLAEDVTLI</sequence>
<comment type="function">
    <text evidence="1">Probably catalyzes the deacetylation of acetylated carbohydrates an important step in the degradation of oligosaccharides.</text>
</comment>
<comment type="cofactor">
    <cofactor evidence="1">
        <name>Mg(2+)</name>
        <dbReference type="ChEBI" id="CHEBI:18420"/>
    </cofactor>
</comment>
<comment type="similarity">
    <text evidence="1">Belongs to the YdjC deacetylase family.</text>
</comment>
<accession>Q9KED9</accession>
<feature type="chain" id="PRO_0000051587" description="Carbohydrate deacetylase">
    <location>
        <begin position="1"/>
        <end position="237"/>
    </location>
</feature>
<feature type="binding site" evidence="1">
    <location>
        <position position="59"/>
    </location>
    <ligand>
        <name>Mg(2+)</name>
        <dbReference type="ChEBI" id="CHEBI:18420"/>
    </ligand>
</feature>
<feature type="binding site" evidence="1">
    <location>
        <position position="125"/>
    </location>
    <ligand>
        <name>Mg(2+)</name>
        <dbReference type="ChEBI" id="CHEBI:18420"/>
    </ligand>
</feature>
<organism>
    <name type="scientific">Halalkalibacterium halodurans (strain ATCC BAA-125 / DSM 18197 / FERM 7344 / JCM 9153 / C-125)</name>
    <name type="common">Bacillus halodurans</name>
    <dbReference type="NCBI Taxonomy" id="272558"/>
    <lineage>
        <taxon>Bacteria</taxon>
        <taxon>Bacillati</taxon>
        <taxon>Bacillota</taxon>
        <taxon>Bacilli</taxon>
        <taxon>Bacillales</taxon>
        <taxon>Bacillaceae</taxon>
        <taxon>Halalkalibacterium (ex Joshi et al. 2022)</taxon>
    </lineage>
</organism>
<dbReference type="EC" id="3.5.1.-" evidence="1"/>
<dbReference type="EMBL" id="BA000004">
    <property type="protein sequence ID" value="BAB04632.1"/>
    <property type="molecule type" value="Genomic_DNA"/>
</dbReference>
<dbReference type="PIR" id="A83764">
    <property type="entry name" value="A83764"/>
</dbReference>
<dbReference type="RefSeq" id="WP_010897086.1">
    <property type="nucleotide sequence ID" value="NC_002570.2"/>
</dbReference>
<dbReference type="SMR" id="Q9KED9"/>
<dbReference type="STRING" id="272558.gene:10726787"/>
<dbReference type="KEGG" id="bha:BH0913"/>
<dbReference type="eggNOG" id="COG3394">
    <property type="taxonomic scope" value="Bacteria"/>
</dbReference>
<dbReference type="HOGENOM" id="CLU_064244_4_0_9"/>
<dbReference type="OrthoDB" id="9774177at2"/>
<dbReference type="Proteomes" id="UP000001258">
    <property type="component" value="Chromosome"/>
</dbReference>
<dbReference type="GO" id="GO:0019213">
    <property type="term" value="F:deacetylase activity"/>
    <property type="evidence" value="ECO:0007669"/>
    <property type="project" value="TreeGrafter"/>
</dbReference>
<dbReference type="GO" id="GO:0016811">
    <property type="term" value="F:hydrolase activity, acting on carbon-nitrogen (but not peptide) bonds, in linear amides"/>
    <property type="evidence" value="ECO:0007669"/>
    <property type="project" value="UniProtKB-UniRule"/>
</dbReference>
<dbReference type="GO" id="GO:0046872">
    <property type="term" value="F:metal ion binding"/>
    <property type="evidence" value="ECO:0007669"/>
    <property type="project" value="UniProtKB-KW"/>
</dbReference>
<dbReference type="GO" id="GO:0000272">
    <property type="term" value="P:polysaccharide catabolic process"/>
    <property type="evidence" value="ECO:0007669"/>
    <property type="project" value="InterPro"/>
</dbReference>
<dbReference type="CDD" id="cd10803">
    <property type="entry name" value="YdjC_EF3048_like"/>
    <property type="match status" value="1"/>
</dbReference>
<dbReference type="Gene3D" id="3.20.20.370">
    <property type="entry name" value="Glycoside hydrolase/deacetylase"/>
    <property type="match status" value="1"/>
</dbReference>
<dbReference type="HAMAP" id="MF_01246">
    <property type="entry name" value="COD"/>
    <property type="match status" value="1"/>
</dbReference>
<dbReference type="InterPro" id="IPR022948">
    <property type="entry name" value="COD_ChbG_bac"/>
</dbReference>
<dbReference type="InterPro" id="IPR011330">
    <property type="entry name" value="Glyco_hydro/deAcase_b/a-brl"/>
</dbReference>
<dbReference type="InterPro" id="IPR006879">
    <property type="entry name" value="YdjC-like"/>
</dbReference>
<dbReference type="NCBIfam" id="NF002559">
    <property type="entry name" value="PRK02134.1"/>
    <property type="match status" value="1"/>
</dbReference>
<dbReference type="PANTHER" id="PTHR31609:SF1">
    <property type="entry name" value="CARBOHYDRATE DEACETYLASE"/>
    <property type="match status" value="1"/>
</dbReference>
<dbReference type="PANTHER" id="PTHR31609">
    <property type="entry name" value="YDJC DEACETYLASE FAMILY MEMBER"/>
    <property type="match status" value="1"/>
</dbReference>
<dbReference type="Pfam" id="PF04794">
    <property type="entry name" value="YdjC"/>
    <property type="match status" value="1"/>
</dbReference>
<dbReference type="SUPFAM" id="SSF88713">
    <property type="entry name" value="Glycoside hydrolase/deacetylase"/>
    <property type="match status" value="1"/>
</dbReference>
<reference key="1">
    <citation type="journal article" date="2000" name="Nucleic Acids Res.">
        <title>Complete genome sequence of the alkaliphilic bacterium Bacillus halodurans and genomic sequence comparison with Bacillus subtilis.</title>
        <authorList>
            <person name="Takami H."/>
            <person name="Nakasone K."/>
            <person name="Takaki Y."/>
            <person name="Maeno G."/>
            <person name="Sasaki R."/>
            <person name="Masui N."/>
            <person name="Fuji F."/>
            <person name="Hirama C."/>
            <person name="Nakamura Y."/>
            <person name="Ogasawara N."/>
            <person name="Kuhara S."/>
            <person name="Horikoshi K."/>
        </authorList>
    </citation>
    <scope>NUCLEOTIDE SEQUENCE [LARGE SCALE GENOMIC DNA]</scope>
    <source>
        <strain>ATCC BAA-125 / DSM 18197 / FERM 7344 / JCM 9153 / C-125</strain>
    </source>
</reference>
<proteinExistence type="inferred from homology"/>
<gene>
    <name type="ordered locus">BH0913</name>
</gene>
<evidence type="ECO:0000255" key="1">
    <source>
        <dbReference type="HAMAP-Rule" id="MF_01246"/>
    </source>
</evidence>
<keyword id="KW-0119">Carbohydrate metabolism</keyword>
<keyword id="KW-0378">Hydrolase</keyword>
<keyword id="KW-0460">Magnesium</keyword>
<keyword id="KW-0479">Metal-binding</keyword>
<keyword id="KW-1185">Reference proteome</keyword>
<protein>
    <recommendedName>
        <fullName evidence="1">Carbohydrate deacetylase</fullName>
        <ecNumber evidence="1">3.5.1.-</ecNumber>
    </recommendedName>
</protein>